<protein>
    <recommendedName>
        <fullName>Phosphopantothenoylcysteine decarboxylase subunit SIS2</fullName>
    </recommendedName>
    <alternativeName>
        <fullName>Halotolerance protein HAL3</fullName>
    </alternativeName>
    <alternativeName>
        <fullName>Sit4 suppressor 2</fullName>
    </alternativeName>
</protein>
<gene>
    <name type="primary">SIS2</name>
    <name type="synonym">HAL3</name>
    <name type="ordered locus">YKR072C</name>
</gene>
<proteinExistence type="evidence at protein level"/>
<name>SIS2_YEAST</name>
<accession>P36024</accession>
<accession>D6VXD3</accession>
<evidence type="ECO:0000250" key="1"/>
<evidence type="ECO:0000256" key="2">
    <source>
        <dbReference type="SAM" id="MobiDB-lite"/>
    </source>
</evidence>
<evidence type="ECO:0000269" key="3">
    <source>
    </source>
</evidence>
<evidence type="ECO:0000269" key="4">
    <source>
    </source>
</evidence>
<evidence type="ECO:0000305" key="5"/>
<evidence type="ECO:0007744" key="6">
    <source>
    </source>
</evidence>
<evidence type="ECO:0007744" key="7">
    <source>
    </source>
</evidence>
<evidence type="ECO:0007744" key="8">
    <source>
    </source>
</evidence>
<evidence type="ECO:0007744" key="9">
    <source>
    </source>
</evidence>
<dbReference type="EMBL" id="U01878">
    <property type="protein sequence ID" value="AAA80000.1"/>
    <property type="molecule type" value="Genomic_DNA"/>
</dbReference>
<dbReference type="EMBL" id="Z28297">
    <property type="protein sequence ID" value="CAA82151.1"/>
    <property type="molecule type" value="Genomic_DNA"/>
</dbReference>
<dbReference type="EMBL" id="BK006944">
    <property type="protein sequence ID" value="DAA09223.1"/>
    <property type="molecule type" value="Genomic_DNA"/>
</dbReference>
<dbReference type="PIR" id="S38149">
    <property type="entry name" value="S38149"/>
</dbReference>
<dbReference type="RefSeq" id="NP_012998.1">
    <property type="nucleotide sequence ID" value="NM_001179862.1"/>
</dbReference>
<dbReference type="SMR" id="P36024"/>
<dbReference type="BioGRID" id="34203">
    <property type="interactions" value="254"/>
</dbReference>
<dbReference type="ComplexPortal" id="CPX-393">
    <property type="entry name" value="Phosphopantothenoylcysteine decarboxylase complex"/>
</dbReference>
<dbReference type="DIP" id="DIP-2521N"/>
<dbReference type="FunCoup" id="P36024">
    <property type="interactions" value="55"/>
</dbReference>
<dbReference type="IntAct" id="P36024">
    <property type="interactions" value="16"/>
</dbReference>
<dbReference type="MINT" id="P36024"/>
<dbReference type="STRING" id="4932.YKR072C"/>
<dbReference type="MoonProt" id="P36024"/>
<dbReference type="GlyGen" id="P36024">
    <property type="glycosylation" value="1 site"/>
</dbReference>
<dbReference type="iPTMnet" id="P36024"/>
<dbReference type="PaxDb" id="4932-YKR072C"/>
<dbReference type="PeptideAtlas" id="P36024"/>
<dbReference type="EnsemblFungi" id="YKR072C_mRNA">
    <property type="protein sequence ID" value="YKR072C"/>
    <property type="gene ID" value="YKR072C"/>
</dbReference>
<dbReference type="GeneID" id="853946"/>
<dbReference type="KEGG" id="sce:YKR072C"/>
<dbReference type="AGR" id="SGD:S000001780"/>
<dbReference type="SGD" id="S000001780">
    <property type="gene designation" value="SIS2"/>
</dbReference>
<dbReference type="VEuPathDB" id="FungiDB:YKR072C"/>
<dbReference type="eggNOG" id="KOG0672">
    <property type="taxonomic scope" value="Eukaryota"/>
</dbReference>
<dbReference type="GeneTree" id="ENSGT00940000176509"/>
<dbReference type="HOGENOM" id="CLU_014402_1_0_1"/>
<dbReference type="InParanoid" id="P36024"/>
<dbReference type="OMA" id="WNPSYPI"/>
<dbReference type="OrthoDB" id="1532798at2759"/>
<dbReference type="BioCyc" id="MetaCyc:MONOMER3O-474"/>
<dbReference type="BioCyc" id="YEAST:MONOMER3O-474"/>
<dbReference type="BioGRID-ORCS" id="853946">
    <property type="hits" value="4 hits in 10 CRISPR screens"/>
</dbReference>
<dbReference type="PRO" id="PR:P36024"/>
<dbReference type="Proteomes" id="UP000002311">
    <property type="component" value="Chromosome XI"/>
</dbReference>
<dbReference type="RNAct" id="P36024">
    <property type="molecule type" value="protein"/>
</dbReference>
<dbReference type="GO" id="GO:0000785">
    <property type="term" value="C:chromatin"/>
    <property type="evidence" value="ECO:0000314"/>
    <property type="project" value="SGD"/>
</dbReference>
<dbReference type="GO" id="GO:1990143">
    <property type="term" value="C:CoA-synthesizing protein complex"/>
    <property type="evidence" value="ECO:0000314"/>
    <property type="project" value="SGD"/>
</dbReference>
<dbReference type="GO" id="GO:0005634">
    <property type="term" value="C:nucleus"/>
    <property type="evidence" value="ECO:0000314"/>
    <property type="project" value="SGD"/>
</dbReference>
<dbReference type="GO" id="GO:0071513">
    <property type="term" value="C:phosphopantothenoylcysteine decarboxylase complex"/>
    <property type="evidence" value="ECO:0000314"/>
    <property type="project" value="SGD"/>
</dbReference>
<dbReference type="GO" id="GO:0003824">
    <property type="term" value="F:catalytic activity"/>
    <property type="evidence" value="ECO:0007669"/>
    <property type="project" value="InterPro"/>
</dbReference>
<dbReference type="GO" id="GO:0010181">
    <property type="term" value="F:FMN binding"/>
    <property type="evidence" value="ECO:0000318"/>
    <property type="project" value="GO_Central"/>
</dbReference>
<dbReference type="GO" id="GO:0042802">
    <property type="term" value="F:identical protein binding"/>
    <property type="evidence" value="ECO:0000353"/>
    <property type="project" value="IntAct"/>
</dbReference>
<dbReference type="GO" id="GO:0004865">
    <property type="term" value="F:protein serine/threonine phosphatase inhibitor activity"/>
    <property type="evidence" value="ECO:0000314"/>
    <property type="project" value="SGD"/>
</dbReference>
<dbReference type="GO" id="GO:0015937">
    <property type="term" value="P:coenzyme A biosynthetic process"/>
    <property type="evidence" value="ECO:0000316"/>
    <property type="project" value="SGD"/>
</dbReference>
<dbReference type="GO" id="GO:0007346">
    <property type="term" value="P:regulation of mitotic cell cycle"/>
    <property type="evidence" value="ECO:0000316"/>
    <property type="project" value="SGD"/>
</dbReference>
<dbReference type="GO" id="GO:0009651">
    <property type="term" value="P:response to salt stress"/>
    <property type="evidence" value="ECO:0000315"/>
    <property type="project" value="SGD"/>
</dbReference>
<dbReference type="Gene3D" id="3.40.50.1950">
    <property type="entry name" value="Flavin prenyltransferase-like"/>
    <property type="match status" value="1"/>
</dbReference>
<dbReference type="InterPro" id="IPR036551">
    <property type="entry name" value="Flavin_trans-like"/>
</dbReference>
<dbReference type="InterPro" id="IPR003382">
    <property type="entry name" value="Flavoprotein"/>
</dbReference>
<dbReference type="PANTHER" id="PTHR14359">
    <property type="entry name" value="HOMO-OLIGOMERIC FLAVIN CONTAINING CYS DECARBOXYLASE FAMILY"/>
    <property type="match status" value="1"/>
</dbReference>
<dbReference type="PANTHER" id="PTHR14359:SF17">
    <property type="entry name" value="PHOSPHOPANTOTHENOYLCYSTEINE DECARBOXYLASE SUBUNIT SIS2-RELATED"/>
    <property type="match status" value="1"/>
</dbReference>
<dbReference type="Pfam" id="PF02441">
    <property type="entry name" value="Flavoprotein"/>
    <property type="match status" value="1"/>
</dbReference>
<dbReference type="SUPFAM" id="SSF52507">
    <property type="entry name" value="Homo-oligomeric flavin-containing Cys decarboxylases, HFCD"/>
    <property type="match status" value="1"/>
</dbReference>
<sequence>MTAVASTSGKQDADHNQSIECPRFSRGQKEILLDHEDAKGKDSIINSPVSGRQSISPTLSNATTTTTKSIMNATGTSGAVVSNTPEPGLKRVPAVTFSDLKQQQKQDSLTQLKNDSERTKSPNSNPAPVSNSIPGNHAVIPNHTNTSRTTQLSGSPLVNEMKDYDPKKKDSALKIVDTMKPDKIMATSTPISRENNKVTAKAPTSITLRKEDAQDQANNVSGQINVRSTPEETPVKQSVIPSIIPKRENSKNLDPRLPQDDGKLHVLFGATGSLSVFKIKPMIKKLEEIYGRDRISIQVILTQSATQFFEQRYTKKIIKSSEKLNKMSQYESTPATPVTPTPGQCNMAQVVELPPHIQLWTDQDEWDAWKQRTDPVLHIELRRWADILVVAPLTANTLSKIALGLCDNLLTSVIRAWNPSYPILLAPSMVSSTFNSMMTKKQLQTIKEEMSWVTVFKPSEKVMDINGDIGLGGMMDWNEIVNKIVMKLGGYPKNNEEEDDDEDEEEDDDEEEDTEDKNENNNDDDDDDDDDDDDDDDDDDDDDDDDEDEDEAETPGIIDKHQ</sequence>
<keyword id="KW-0173">Coenzyme A biosynthesis</keyword>
<keyword id="KW-0963">Cytoplasm</keyword>
<keyword id="KW-0539">Nucleus</keyword>
<keyword id="KW-0597">Phosphoprotein</keyword>
<keyword id="KW-0650">Protein phosphatase inhibitor</keyword>
<keyword id="KW-1185">Reference proteome</keyword>
<reference key="1">
    <citation type="journal article" date="1995" name="Genetics">
        <title>Overexpression of SIS2, which contains an extremely acidic region, increases the expression of SWI4, CLN1 and CLN2 in sit4 mutants.</title>
        <authorList>
            <person name="di Como C.J."/>
            <person name="Bose R."/>
            <person name="Arndt K.T."/>
        </authorList>
    </citation>
    <scope>NUCLEOTIDE SEQUENCE [GENOMIC DNA]</scope>
</reference>
<reference key="2">
    <citation type="journal article" date="1994" name="Nature">
        <title>Complete DNA sequence of yeast chromosome XI.</title>
        <authorList>
            <person name="Dujon B."/>
            <person name="Alexandraki D."/>
            <person name="Andre B."/>
            <person name="Ansorge W."/>
            <person name="Baladron V."/>
            <person name="Ballesta J.P.G."/>
            <person name="Banrevi A."/>
            <person name="Bolle P.-A."/>
            <person name="Bolotin-Fukuhara M."/>
            <person name="Bossier P."/>
            <person name="Bou G."/>
            <person name="Boyer J."/>
            <person name="Buitrago M.J."/>
            <person name="Cheret G."/>
            <person name="Colleaux L."/>
            <person name="Daignan-Fornier B."/>
            <person name="del Rey F."/>
            <person name="Dion C."/>
            <person name="Domdey H."/>
            <person name="Duesterhoeft A."/>
            <person name="Duesterhus S."/>
            <person name="Entian K.-D."/>
            <person name="Erfle H."/>
            <person name="Esteban P.F."/>
            <person name="Feldmann H."/>
            <person name="Fernandes L."/>
            <person name="Fobo G.M."/>
            <person name="Fritz C."/>
            <person name="Fukuhara H."/>
            <person name="Gabel C."/>
            <person name="Gaillon L."/>
            <person name="Garcia-Cantalejo J.M."/>
            <person name="Garcia-Ramirez J.J."/>
            <person name="Gent M.E."/>
            <person name="Ghazvini M."/>
            <person name="Goffeau A."/>
            <person name="Gonzalez A."/>
            <person name="Grothues D."/>
            <person name="Guerreiro P."/>
            <person name="Hegemann J.H."/>
            <person name="Hewitt N."/>
            <person name="Hilger F."/>
            <person name="Hollenberg C.P."/>
            <person name="Horaitis O."/>
            <person name="Indge K.J."/>
            <person name="Jacquier A."/>
            <person name="James C.M."/>
            <person name="Jauniaux J.-C."/>
            <person name="Jimenez A."/>
            <person name="Keuchel H."/>
            <person name="Kirchrath L."/>
            <person name="Kleine K."/>
            <person name="Koetter P."/>
            <person name="Legrain P."/>
            <person name="Liebl S."/>
            <person name="Louis E.J."/>
            <person name="Maia e Silva A."/>
            <person name="Marck C."/>
            <person name="Monnier A.-L."/>
            <person name="Moestl D."/>
            <person name="Mueller S."/>
            <person name="Obermaier B."/>
            <person name="Oliver S.G."/>
            <person name="Pallier C."/>
            <person name="Pascolo S."/>
            <person name="Pfeiffer F."/>
            <person name="Philippsen P."/>
            <person name="Planta R.J."/>
            <person name="Pohl F.M."/>
            <person name="Pohl T.M."/>
            <person name="Poehlmann R."/>
            <person name="Portetelle D."/>
            <person name="Purnelle B."/>
            <person name="Puzos V."/>
            <person name="Ramezani Rad M."/>
            <person name="Rasmussen S.W."/>
            <person name="Remacha M.A."/>
            <person name="Revuelta J.L."/>
            <person name="Richard G.-F."/>
            <person name="Rieger M."/>
            <person name="Rodrigues-Pousada C."/>
            <person name="Rose M."/>
            <person name="Rupp T."/>
            <person name="Santos M.A."/>
            <person name="Schwager C."/>
            <person name="Sensen C."/>
            <person name="Skala J."/>
            <person name="Soares H."/>
            <person name="Sor F."/>
            <person name="Stegemann J."/>
            <person name="Tettelin H."/>
            <person name="Thierry A."/>
            <person name="Tzermia M."/>
            <person name="Urrestarazu L.A."/>
            <person name="van Dyck L."/>
            <person name="van Vliet-Reedijk J.C."/>
            <person name="Valens M."/>
            <person name="Vandenbol M."/>
            <person name="Vilela C."/>
            <person name="Vissers S."/>
            <person name="von Wettstein D."/>
            <person name="Voss H."/>
            <person name="Wiemann S."/>
            <person name="Xu G."/>
            <person name="Zimmermann J."/>
            <person name="Haasemann M."/>
            <person name="Becker I."/>
            <person name="Mewes H.-W."/>
        </authorList>
    </citation>
    <scope>NUCLEOTIDE SEQUENCE [LARGE SCALE GENOMIC DNA]</scope>
    <source>
        <strain>ATCC 204508 / S288c</strain>
    </source>
</reference>
<reference key="3">
    <citation type="journal article" date="2014" name="G3 (Bethesda)">
        <title>The reference genome sequence of Saccharomyces cerevisiae: Then and now.</title>
        <authorList>
            <person name="Engel S.R."/>
            <person name="Dietrich F.S."/>
            <person name="Fisk D.G."/>
            <person name="Binkley G."/>
            <person name="Balakrishnan R."/>
            <person name="Costanzo M.C."/>
            <person name="Dwight S.S."/>
            <person name="Hitz B.C."/>
            <person name="Karra K."/>
            <person name="Nash R.S."/>
            <person name="Weng S."/>
            <person name="Wong E.D."/>
            <person name="Lloyd P."/>
            <person name="Skrzypek M.S."/>
            <person name="Miyasato S.R."/>
            <person name="Simison M."/>
            <person name="Cherry J.M."/>
        </authorList>
    </citation>
    <scope>GENOME REANNOTATION</scope>
    <source>
        <strain>ATCC 204508 / S288c</strain>
    </source>
</reference>
<reference key="4">
    <citation type="journal article" date="1995" name="Mol. Cell. Biol.">
        <title>Regulation of cation transport in Saccharomyces cerevisiae by the salt tolerance gene HAL3.</title>
        <authorList>
            <person name="Ferrando A."/>
            <person name="Kron S.J."/>
            <person name="Rios G."/>
            <person name="Fink G.R."/>
            <person name="Serrano R."/>
        </authorList>
    </citation>
    <scope>CHARACTERIZATION</scope>
</reference>
<reference key="5">
    <citation type="journal article" date="1998" name="Proc. Natl. Acad. Sci. U.S.A.">
        <title>The yeast halotolerance determinant Hal3p is an inhibitory subunit of the Ppz1p Ser/Thr protein phosphatase.</title>
        <authorList>
            <person name="de Nadal E."/>
            <person name="Clotet J."/>
            <person name="Posas F."/>
            <person name="Serrano R."/>
            <person name="Gomez N."/>
            <person name="Arino J."/>
        </authorList>
    </citation>
    <scope>IDENTIFICATION AS AN INHIBITORY SUBUNIT OF PPZ1</scope>
</reference>
<reference key="6">
    <citation type="journal article" date="2003" name="Mol. Cell">
        <title>Assigning function to yeast proteins by integration of technologies.</title>
        <authorList>
            <person name="Hazbun T.R."/>
            <person name="Malmstroem L."/>
            <person name="Anderson S."/>
            <person name="Graczyk B.J."/>
            <person name="Fox B."/>
            <person name="Riffle M."/>
            <person name="Sundin B.A."/>
            <person name="Aranda J.D."/>
            <person name="McDonald W.H."/>
            <person name="Chiu C.-H."/>
            <person name="Snydsman B.E."/>
            <person name="Bradley P."/>
            <person name="Muller E.G.D."/>
            <person name="Fields S."/>
            <person name="Baker D."/>
            <person name="Yates J.R. III"/>
            <person name="Davis T.N."/>
        </authorList>
    </citation>
    <scope>IDENTIFICATION BY MASS SPECTROMETRY</scope>
</reference>
<reference key="7">
    <citation type="journal article" date="2003" name="Nature">
        <title>Global analysis of protein expression in yeast.</title>
        <authorList>
            <person name="Ghaemmaghami S."/>
            <person name="Huh W.-K."/>
            <person name="Bower K."/>
            <person name="Howson R.W."/>
            <person name="Belle A."/>
            <person name="Dephoure N."/>
            <person name="O'Shea E.K."/>
            <person name="Weissman J.S."/>
        </authorList>
    </citation>
    <scope>LEVEL OF PROTEIN EXPRESSION [LARGE SCALE ANALYSIS]</scope>
</reference>
<reference key="8">
    <citation type="journal article" date="2005" name="Mol. Cell. Proteomics">
        <title>Quantitative phosphoproteomics applied to the yeast pheromone signaling pathway.</title>
        <authorList>
            <person name="Gruhler A."/>
            <person name="Olsen J.V."/>
            <person name="Mohammed S."/>
            <person name="Mortensen P."/>
            <person name="Faergeman N.J."/>
            <person name="Mann M."/>
            <person name="Jensen O.N."/>
        </authorList>
    </citation>
    <scope>PHOSPHORYLATION [LARGE SCALE ANALYSIS] AT SER-56</scope>
    <scope>IDENTIFICATION BY MASS SPECTROMETRY [LARGE SCALE ANALYSIS]</scope>
    <source>
        <strain>YAL6B</strain>
    </source>
</reference>
<reference key="9">
    <citation type="journal article" date="2007" name="J. Proteome Res.">
        <title>Large-scale phosphorylation analysis of alpha-factor-arrested Saccharomyces cerevisiae.</title>
        <authorList>
            <person name="Li X."/>
            <person name="Gerber S.A."/>
            <person name="Rudner A.D."/>
            <person name="Beausoleil S.A."/>
            <person name="Haas W."/>
            <person name="Villen J."/>
            <person name="Elias J.E."/>
            <person name="Gygi S.P."/>
        </authorList>
    </citation>
    <scope>PHOSPHORYLATION [LARGE SCALE ANALYSIS] AT SER-47; SER-50 AND SER-54</scope>
    <scope>IDENTIFICATION BY MASS SPECTROMETRY [LARGE SCALE ANALYSIS]</scope>
    <source>
        <strain>ADR376</strain>
    </source>
</reference>
<reference key="10">
    <citation type="journal article" date="2008" name="Mol. Cell. Proteomics">
        <title>A multidimensional chromatography technology for in-depth phosphoproteome analysis.</title>
        <authorList>
            <person name="Albuquerque C.P."/>
            <person name="Smolka M.B."/>
            <person name="Payne S.H."/>
            <person name="Bafna V."/>
            <person name="Eng J."/>
            <person name="Zhou H."/>
        </authorList>
    </citation>
    <scope>PHOSPHORYLATION [LARGE SCALE ANALYSIS] AT SER-47 AND SER-155</scope>
    <scope>IDENTIFICATION BY MASS SPECTROMETRY [LARGE SCALE ANALYSIS]</scope>
</reference>
<reference key="11">
    <citation type="journal article" date="2009" name="Nat. Chem. Biol.">
        <title>Moonlighting proteins Hal3 and Vhs3 form a heteromeric PPCDC with Ykl088w in yeast CoA biosynthesis.</title>
        <authorList>
            <person name="Ruiz A."/>
            <person name="Gonzalez A."/>
            <person name="Munoz I."/>
            <person name="Serrano R."/>
            <person name="Abrie J.A."/>
            <person name="Strauss E."/>
            <person name="Arino J."/>
        </authorList>
    </citation>
    <scope>FUNCTION</scope>
    <scope>MUTAGENESIS OF HIS-378</scope>
    <scope>INTERACTION WITH CAB3 AND VHS3</scope>
</reference>
<reference key="12">
    <citation type="journal article" date="2009" name="Science">
        <title>Global analysis of Cdk1 substrate phosphorylation sites provides insights into evolution.</title>
        <authorList>
            <person name="Holt L.J."/>
            <person name="Tuch B.B."/>
            <person name="Villen J."/>
            <person name="Johnson A.D."/>
            <person name="Gygi S.P."/>
            <person name="Morgan D.O."/>
        </authorList>
    </citation>
    <scope>PHOSPHORYLATION [LARGE SCALE ANALYSIS] AT SER-47; SER-50; SER-54 AND SER-56</scope>
    <scope>IDENTIFICATION BY MASS SPECTROMETRY [LARGE SCALE ANALYSIS]</scope>
</reference>
<reference key="13">
    <citation type="journal article" date="2012" name="Proc. Natl. Acad. Sci. U.S.A.">
        <title>N-terminal acetylome analyses and functional insights of the N-terminal acetyltransferase NatB.</title>
        <authorList>
            <person name="Van Damme P."/>
            <person name="Lasa M."/>
            <person name="Polevoda B."/>
            <person name="Gazquez C."/>
            <person name="Elosegui-Artola A."/>
            <person name="Kim D.S."/>
            <person name="De Juan-Pardo E."/>
            <person name="Demeyer K."/>
            <person name="Hole K."/>
            <person name="Larrea E."/>
            <person name="Timmerman E."/>
            <person name="Prieto J."/>
            <person name="Arnesen T."/>
            <person name="Sherman F."/>
            <person name="Gevaert K."/>
            <person name="Aldabe R."/>
        </authorList>
    </citation>
    <scope>IDENTIFICATION BY MASS SPECTROMETRY [LARGE SCALE ANALYSIS]</scope>
</reference>
<organism>
    <name type="scientific">Saccharomyces cerevisiae (strain ATCC 204508 / S288c)</name>
    <name type="common">Baker's yeast</name>
    <dbReference type="NCBI Taxonomy" id="559292"/>
    <lineage>
        <taxon>Eukaryota</taxon>
        <taxon>Fungi</taxon>
        <taxon>Dikarya</taxon>
        <taxon>Ascomycota</taxon>
        <taxon>Saccharomycotina</taxon>
        <taxon>Saccharomycetes</taxon>
        <taxon>Saccharomycetales</taxon>
        <taxon>Saccharomycetaceae</taxon>
        <taxon>Saccharomyces</taxon>
    </lineage>
</organism>
<feature type="chain" id="PRO_0000182037" description="Phosphopantothenoylcysteine decarboxylase subunit SIS2">
    <location>
        <begin position="1"/>
        <end position="562"/>
    </location>
</feature>
<feature type="region of interest" description="Disordered" evidence="2">
    <location>
        <begin position="1"/>
        <end position="63"/>
    </location>
</feature>
<feature type="region of interest" description="Disordered" evidence="2">
    <location>
        <begin position="97"/>
        <end position="165"/>
    </location>
</feature>
<feature type="region of interest" description="Disordered" evidence="2">
    <location>
        <begin position="490"/>
        <end position="562"/>
    </location>
</feature>
<feature type="compositionally biased region" description="Polar residues" evidence="2">
    <location>
        <begin position="1"/>
        <end position="10"/>
    </location>
</feature>
<feature type="compositionally biased region" description="Basic and acidic residues" evidence="2">
    <location>
        <begin position="27"/>
        <end position="42"/>
    </location>
</feature>
<feature type="compositionally biased region" description="Polar residues" evidence="2">
    <location>
        <begin position="44"/>
        <end position="63"/>
    </location>
</feature>
<feature type="compositionally biased region" description="Polar residues" evidence="2">
    <location>
        <begin position="99"/>
        <end position="113"/>
    </location>
</feature>
<feature type="compositionally biased region" description="Low complexity" evidence="2">
    <location>
        <begin position="121"/>
        <end position="134"/>
    </location>
</feature>
<feature type="compositionally biased region" description="Polar residues" evidence="2">
    <location>
        <begin position="142"/>
        <end position="156"/>
    </location>
</feature>
<feature type="compositionally biased region" description="Acidic residues" evidence="2">
    <location>
        <begin position="496"/>
        <end position="553"/>
    </location>
</feature>
<feature type="modified residue" description="Phosphoserine" evidence="7 8 9">
    <location>
        <position position="47"/>
    </location>
</feature>
<feature type="modified residue" description="Phosphoserine" evidence="7 9">
    <location>
        <position position="50"/>
    </location>
</feature>
<feature type="modified residue" description="Phosphoserine" evidence="7 9">
    <location>
        <position position="54"/>
    </location>
</feature>
<feature type="modified residue" description="Phosphoserine" evidence="6 9">
    <location>
        <position position="56"/>
    </location>
</feature>
<feature type="modified residue" description="Phosphoserine" evidence="8">
    <location>
        <position position="155"/>
    </location>
</feature>
<feature type="mutagenesis site" description="Abolishes PPCDC activity." evidence="4">
    <original>H</original>
    <variation>A</variation>
    <location>
        <position position="378"/>
    </location>
</feature>
<comment type="function">
    <text evidence="4">Component of the phosphopantothenoylcysteine decarboxylase (PPCDC) involved in the coenzyme A synthesis. Acts as an inhibitory subunit of protein phosphatase PPZ1, which is involved in many cellular processes such as G1-S transition or salt tolerance. Also modulates the expression of the ENA1 ATPase.</text>
</comment>
<comment type="subunit">
    <text evidence="4">Interacts with the C-terminal domain of PPZ1. Component of the phosphopantothenoylcysteine decarboxylase (PPCDC) complex, a heterotrimer composed of CAB3, SIS2 and VHS3.</text>
</comment>
<comment type="interaction">
    <interactant intactId="EBI-17250">
        <id>P36024</id>
    </interactant>
    <interactant intactId="EBI-26778">
        <id>P36076</id>
        <label>CAB3</label>
    </interactant>
    <organismsDiffer>false</organismsDiffer>
    <experiments>10</experiments>
</comment>
<comment type="interaction">
    <interactant intactId="EBI-17250">
        <id>P36024</id>
    </interactant>
    <interactant intactId="EBI-13807">
        <id>P26570</id>
        <label>PPZ1</label>
    </interactant>
    <organismsDiffer>false</organismsDiffer>
    <experiments>8</experiments>
</comment>
<comment type="interaction">
    <interactant intactId="EBI-17250">
        <id>P36024</id>
    </interactant>
    <interactant intactId="EBI-13815">
        <id>P33329</id>
        <label>PPZ2</label>
    </interactant>
    <organismsDiffer>false</organismsDiffer>
    <experiments>3</experiments>
</comment>
<comment type="interaction">
    <interactant intactId="EBI-17250">
        <id>P36024</id>
    </interactant>
    <interactant intactId="EBI-17250">
        <id>P36024</id>
        <label>SIS2</label>
    </interactant>
    <organismsDiffer>false</organismsDiffer>
    <experiments>5</experiments>
</comment>
<comment type="interaction">
    <interactant intactId="EBI-17250">
        <id>P36024</id>
    </interactant>
    <interactant intactId="EBI-30482">
        <id>Q08438</id>
        <label>VHS3</label>
    </interactant>
    <organismsDiffer>false</organismsDiffer>
    <experiments>4</experiments>
</comment>
<comment type="subcellular location">
    <subcellularLocation>
        <location evidence="1">Nucleus</location>
    </subcellularLocation>
    <subcellularLocation>
        <location evidence="1">Cytoplasm</location>
    </subcellularLocation>
</comment>
<comment type="miscellaneous">
    <text evidence="3">Present with 3750 molecules/cell in log phase SD medium.</text>
</comment>
<comment type="similarity">
    <text evidence="5">Belongs to the HFCD (homooligomeric flavin containing Cys decarboxylase) superfamily.</text>
</comment>